<accession>Q86QV8</accession>
<organism>
    <name type="scientific">Centruroides noxius</name>
    <name type="common">Mexican scorpion</name>
    <dbReference type="NCBI Taxonomy" id="6878"/>
    <lineage>
        <taxon>Eukaryota</taxon>
        <taxon>Metazoa</taxon>
        <taxon>Ecdysozoa</taxon>
        <taxon>Arthropoda</taxon>
        <taxon>Chelicerata</taxon>
        <taxon>Arachnida</taxon>
        <taxon>Scorpiones</taxon>
        <taxon>Buthida</taxon>
        <taxon>Buthoidea</taxon>
        <taxon>Buthidae</taxon>
        <taxon>Centruroides</taxon>
    </lineage>
</organism>
<keyword id="KW-1015">Disulfide bond</keyword>
<keyword id="KW-0872">Ion channel impairing toxin</keyword>
<keyword id="KW-0960">Knottin</keyword>
<keyword id="KW-0528">Neurotoxin</keyword>
<keyword id="KW-0632">Potassium channel impairing toxin</keyword>
<keyword id="KW-0964">Secreted</keyword>
<keyword id="KW-0800">Toxin</keyword>
<keyword id="KW-1220">Voltage-gated potassium channel impairing toxin</keyword>
<evidence type="ECO:0000250" key="1"/>
<evidence type="ECO:0000250" key="2">
    <source>
        <dbReference type="UniProtKB" id="P59940"/>
    </source>
</evidence>
<evidence type="ECO:0000250" key="3">
    <source>
        <dbReference type="UniProtKB" id="Q86QT3"/>
    </source>
</evidence>
<evidence type="ECO:0000250" key="4">
    <source>
        <dbReference type="UniProtKB" id="Q86QU9"/>
    </source>
</evidence>
<evidence type="ECO:0000303" key="5">
    <source>
    </source>
</evidence>
<evidence type="ECO:0000305" key="6"/>
<reference key="1">
    <citation type="journal article" date="2002" name="FEBS Lett.">
        <title>A large number of novel Ergtoxin-like genes and ERG K+-channels blocking peptides from scorpions of the genus Centruroides.</title>
        <authorList>
            <person name="Corona M."/>
            <person name="Gurrola G.B."/>
            <person name="Merino E."/>
            <person name="Cassulini R.R."/>
            <person name="Valdez-Cruz N.A."/>
            <person name="Garcia B."/>
            <person name="Ramirez-Dominguez M.E."/>
            <person name="Coronas F.I."/>
            <person name="Zamudio F.Z."/>
            <person name="Wanke E."/>
            <person name="Possani L.D."/>
        </authorList>
    </citation>
    <scope>NUCLEOTIDE SEQUENCE [MRNA]</scope>
    <scope>NOMENCLATURE</scope>
    <source>
        <tissue>Venom gland</tissue>
    </source>
</reference>
<comment type="function">
    <text evidence="2">Reversibly blocks Kv11/ERG potassium channels.</text>
</comment>
<comment type="subcellular location">
    <subcellularLocation>
        <location evidence="4">Secreted</location>
    </subcellularLocation>
</comment>
<comment type="tissue specificity">
    <text evidence="6">Expressed by the venom gland.</text>
</comment>
<comment type="domain">
    <text evidence="1">The presence of a 'disulfide through disulfide knot' structurally defines this protein as a knottin.</text>
</comment>
<comment type="domain">
    <text evidence="3">Has the CSalpha/beta fold, which comprises one or two short alpha helices connected to anti-parallel beta-sheets stabilized by three or four disulfide bonds.</text>
</comment>
<comment type="similarity">
    <text evidence="6">Belongs to the ergtoxin family. Gamma-KTx 4 subfamily.</text>
</comment>
<dbReference type="EMBL" id="AY159335">
    <property type="protein sequence ID" value="AAO22213.1"/>
    <property type="molecule type" value="mRNA"/>
</dbReference>
<dbReference type="SMR" id="Q86QV8"/>
<dbReference type="GO" id="GO:0005576">
    <property type="term" value="C:extracellular region"/>
    <property type="evidence" value="ECO:0007669"/>
    <property type="project" value="UniProtKB-SubCell"/>
</dbReference>
<dbReference type="GO" id="GO:0019870">
    <property type="term" value="F:potassium channel inhibitor activity"/>
    <property type="evidence" value="ECO:0007669"/>
    <property type="project" value="InterPro"/>
</dbReference>
<dbReference type="GO" id="GO:0090729">
    <property type="term" value="F:toxin activity"/>
    <property type="evidence" value="ECO:0007669"/>
    <property type="project" value="UniProtKB-KW"/>
</dbReference>
<dbReference type="Gene3D" id="3.30.30.10">
    <property type="entry name" value="Knottin, scorpion toxin-like"/>
    <property type="match status" value="1"/>
</dbReference>
<dbReference type="InterPro" id="IPR012622">
    <property type="entry name" value="Ergtoxin"/>
</dbReference>
<dbReference type="InterPro" id="IPR036574">
    <property type="entry name" value="Scorpion_toxin-like_sf"/>
</dbReference>
<dbReference type="Pfam" id="PF08086">
    <property type="entry name" value="Toxin_17"/>
    <property type="match status" value="1"/>
</dbReference>
<dbReference type="SUPFAM" id="SSF57095">
    <property type="entry name" value="Scorpion toxin-like"/>
    <property type="match status" value="1"/>
</dbReference>
<dbReference type="PROSITE" id="PS60026">
    <property type="entry name" value="ERGTX"/>
    <property type="match status" value="1"/>
</dbReference>
<proteinExistence type="inferred from homology"/>
<feature type="chain" id="PRO_0000066842" description="Potassium channel toxin gamma-KTx 4.11">
    <location>
        <begin position="1"/>
        <end position="43"/>
    </location>
</feature>
<feature type="disulfide bond" evidence="3">
    <location>
        <begin position="5"/>
        <end position="23"/>
    </location>
</feature>
<feature type="disulfide bond" evidence="3">
    <location>
        <begin position="11"/>
        <end position="34"/>
    </location>
</feature>
<feature type="disulfide bond" evidence="3">
    <location>
        <begin position="20"/>
        <end position="39"/>
    </location>
</feature>
<feature type="disulfide bond" evidence="3">
    <location>
        <begin position="24"/>
        <end position="41"/>
    </location>
</feature>
<sequence>DRDSCVDKSQCGKYGYYGQCDECCKKAGERVGTCVYYKCKCNP</sequence>
<protein>
    <recommendedName>
        <fullName evidence="5">Potassium channel toxin gamma-KTx 4.11</fullName>
    </recommendedName>
    <alternativeName>
        <fullName evidence="6">CnErgTx4</fullName>
        <shortName evidence="5">CnErg4</shortName>
        <shortName evidence="5">ErgTx4</shortName>
    </alternativeName>
    <alternativeName>
        <fullName evidence="5">Ergtoxin-like protein</fullName>
    </alternativeName>
</protein>
<name>KGX4B_CENNO</name>